<feature type="chain" id="PRO_0000325352" description="3-phosphoshikimate 1-carboxyvinyltransferase">
    <location>
        <begin position="1"/>
        <end position="439"/>
    </location>
</feature>
<feature type="active site" description="Proton acceptor" evidence="1">
    <location>
        <position position="320"/>
    </location>
</feature>
<feature type="binding site" evidence="1">
    <location>
        <position position="21"/>
    </location>
    <ligand>
        <name>3-phosphoshikimate</name>
        <dbReference type="ChEBI" id="CHEBI:145989"/>
    </ligand>
</feature>
<feature type="binding site" evidence="1">
    <location>
        <position position="21"/>
    </location>
    <ligand>
        <name>phosphoenolpyruvate</name>
        <dbReference type="ChEBI" id="CHEBI:58702"/>
    </ligand>
</feature>
<feature type="binding site" evidence="1">
    <location>
        <position position="22"/>
    </location>
    <ligand>
        <name>3-phosphoshikimate</name>
        <dbReference type="ChEBI" id="CHEBI:145989"/>
    </ligand>
</feature>
<feature type="binding site" evidence="1">
    <location>
        <position position="26"/>
    </location>
    <ligand>
        <name>3-phosphoshikimate</name>
        <dbReference type="ChEBI" id="CHEBI:145989"/>
    </ligand>
</feature>
<feature type="binding site" evidence="1">
    <location>
        <position position="94"/>
    </location>
    <ligand>
        <name>phosphoenolpyruvate</name>
        <dbReference type="ChEBI" id="CHEBI:58702"/>
    </ligand>
</feature>
<feature type="binding site" evidence="1">
    <location>
        <position position="122"/>
    </location>
    <ligand>
        <name>phosphoenolpyruvate</name>
        <dbReference type="ChEBI" id="CHEBI:58702"/>
    </ligand>
</feature>
<feature type="binding site" evidence="1">
    <location>
        <position position="167"/>
    </location>
    <ligand>
        <name>3-phosphoshikimate</name>
        <dbReference type="ChEBI" id="CHEBI:145989"/>
    </ligand>
</feature>
<feature type="binding site" evidence="1">
    <location>
        <position position="169"/>
    </location>
    <ligand>
        <name>3-phosphoshikimate</name>
        <dbReference type="ChEBI" id="CHEBI:145989"/>
    </ligand>
</feature>
<feature type="binding site" evidence="1">
    <location>
        <position position="169"/>
    </location>
    <ligand>
        <name>phosphoenolpyruvate</name>
        <dbReference type="ChEBI" id="CHEBI:58702"/>
    </ligand>
</feature>
<feature type="binding site" evidence="1">
    <location>
        <position position="320"/>
    </location>
    <ligand>
        <name>3-phosphoshikimate</name>
        <dbReference type="ChEBI" id="CHEBI:145989"/>
    </ligand>
</feature>
<feature type="binding site" evidence="1">
    <location>
        <position position="347"/>
    </location>
    <ligand>
        <name>3-phosphoshikimate</name>
        <dbReference type="ChEBI" id="CHEBI:145989"/>
    </ligand>
</feature>
<feature type="binding site" evidence="1">
    <location>
        <position position="351"/>
    </location>
    <ligand>
        <name>phosphoenolpyruvate</name>
        <dbReference type="ChEBI" id="CHEBI:58702"/>
    </ligand>
</feature>
<feature type="binding site" evidence="1">
    <location>
        <position position="395"/>
    </location>
    <ligand>
        <name>phosphoenolpyruvate</name>
        <dbReference type="ChEBI" id="CHEBI:58702"/>
    </ligand>
</feature>
<proteinExistence type="inferred from homology"/>
<keyword id="KW-0028">Amino-acid biosynthesis</keyword>
<keyword id="KW-0057">Aromatic amino acid biosynthesis</keyword>
<keyword id="KW-0963">Cytoplasm</keyword>
<keyword id="KW-1185">Reference proteome</keyword>
<keyword id="KW-0808">Transferase</keyword>
<organism>
    <name type="scientific">Hyphomonas neptunium (strain ATCC 15444)</name>
    <dbReference type="NCBI Taxonomy" id="228405"/>
    <lineage>
        <taxon>Bacteria</taxon>
        <taxon>Pseudomonadati</taxon>
        <taxon>Pseudomonadota</taxon>
        <taxon>Alphaproteobacteria</taxon>
        <taxon>Hyphomonadales</taxon>
        <taxon>Hyphomonadaceae</taxon>
        <taxon>Hyphomonas</taxon>
    </lineage>
</organism>
<gene>
    <name evidence="1" type="primary">aroA</name>
    <name type="ordered locus">HNE_0195</name>
</gene>
<protein>
    <recommendedName>
        <fullName evidence="1">3-phosphoshikimate 1-carboxyvinyltransferase</fullName>
        <ecNumber evidence="1">2.5.1.19</ecNumber>
    </recommendedName>
    <alternativeName>
        <fullName evidence="1">5-enolpyruvylshikimate-3-phosphate synthase</fullName>
        <shortName evidence="1">EPSP synthase</shortName>
        <shortName evidence="1">EPSPS</shortName>
    </alternativeName>
</protein>
<evidence type="ECO:0000255" key="1">
    <source>
        <dbReference type="HAMAP-Rule" id="MF_00210"/>
    </source>
</evidence>
<comment type="function">
    <text evidence="1">Catalyzes the transfer of the enolpyruvyl moiety of phosphoenolpyruvate (PEP) to the 5-hydroxyl of shikimate-3-phosphate (S3P) to produce enolpyruvyl shikimate-3-phosphate and inorganic phosphate.</text>
</comment>
<comment type="catalytic activity">
    <reaction evidence="1">
        <text>3-phosphoshikimate + phosphoenolpyruvate = 5-O-(1-carboxyvinyl)-3-phosphoshikimate + phosphate</text>
        <dbReference type="Rhea" id="RHEA:21256"/>
        <dbReference type="ChEBI" id="CHEBI:43474"/>
        <dbReference type="ChEBI" id="CHEBI:57701"/>
        <dbReference type="ChEBI" id="CHEBI:58702"/>
        <dbReference type="ChEBI" id="CHEBI:145989"/>
        <dbReference type="EC" id="2.5.1.19"/>
    </reaction>
    <physiologicalReaction direction="left-to-right" evidence="1">
        <dbReference type="Rhea" id="RHEA:21257"/>
    </physiologicalReaction>
</comment>
<comment type="pathway">
    <text evidence="1">Metabolic intermediate biosynthesis; chorismate biosynthesis; chorismate from D-erythrose 4-phosphate and phosphoenolpyruvate: step 6/7.</text>
</comment>
<comment type="subunit">
    <text evidence="1">Monomer.</text>
</comment>
<comment type="subcellular location">
    <subcellularLocation>
        <location evidence="1">Cytoplasm</location>
    </subcellularLocation>
</comment>
<comment type="similarity">
    <text evidence="1">Belongs to the EPSP synthase family.</text>
</comment>
<name>AROA_HYPNA</name>
<accession>Q0C5R4</accession>
<sequence length="439" mass="45600">MVWTSHPVKRLAGAIRAPGDKSCSHRALIFGGLAEGESRFSGLLEGDDVLRTGQAMEAMGATVTRTGPGSWDVTGVGAKGLSSPKGVLDFGNSGTGSRLLMGVMAGYDLTASLTGDASLCSRPMNRVLNPLRQMGLKDTAGPDGKLPFTLTGSKSLKAIRYAPPQASAQVKSAVLLAGLNAEGETVVAEAKATRDHTERMLQGFGATLSFRMAPGGVHEIALKGGQRLRGLDAEIPGDPSSAAFLIAAGLLSPQGDVLVEGVMSNPTRSGFYDVADLMGASLGADERGEAAGERLIDIHSGYAGLKGIHVPERLVASMIDEFPILAVLAAFATGETRVTGAEELRVKESDRIGAVVAMLRVNGVEVEETEDGFTVQGCGGRVPGGGLVETRHDHRIAMSALVMGTAAQKPVSVDDISMIDTSYPEFMSHMATLGADIRS</sequence>
<dbReference type="EC" id="2.5.1.19" evidence="1"/>
<dbReference type="EMBL" id="CP000158">
    <property type="protein sequence ID" value="ABI78571.1"/>
    <property type="molecule type" value="Genomic_DNA"/>
</dbReference>
<dbReference type="RefSeq" id="WP_011645229.1">
    <property type="nucleotide sequence ID" value="NC_008358.1"/>
</dbReference>
<dbReference type="SMR" id="Q0C5R4"/>
<dbReference type="STRING" id="228405.HNE_0195"/>
<dbReference type="KEGG" id="hne:HNE_0195"/>
<dbReference type="eggNOG" id="COG0128">
    <property type="taxonomic scope" value="Bacteria"/>
</dbReference>
<dbReference type="HOGENOM" id="CLU_024321_0_1_5"/>
<dbReference type="UniPathway" id="UPA00053">
    <property type="reaction ID" value="UER00089"/>
</dbReference>
<dbReference type="Proteomes" id="UP000001959">
    <property type="component" value="Chromosome"/>
</dbReference>
<dbReference type="GO" id="GO:0005737">
    <property type="term" value="C:cytoplasm"/>
    <property type="evidence" value="ECO:0007669"/>
    <property type="project" value="UniProtKB-SubCell"/>
</dbReference>
<dbReference type="GO" id="GO:0003866">
    <property type="term" value="F:3-phosphoshikimate 1-carboxyvinyltransferase activity"/>
    <property type="evidence" value="ECO:0007669"/>
    <property type="project" value="UniProtKB-UniRule"/>
</dbReference>
<dbReference type="GO" id="GO:0008652">
    <property type="term" value="P:amino acid biosynthetic process"/>
    <property type="evidence" value="ECO:0007669"/>
    <property type="project" value="UniProtKB-KW"/>
</dbReference>
<dbReference type="GO" id="GO:0009073">
    <property type="term" value="P:aromatic amino acid family biosynthetic process"/>
    <property type="evidence" value="ECO:0007669"/>
    <property type="project" value="UniProtKB-KW"/>
</dbReference>
<dbReference type="GO" id="GO:0009423">
    <property type="term" value="P:chorismate biosynthetic process"/>
    <property type="evidence" value="ECO:0007669"/>
    <property type="project" value="UniProtKB-UniRule"/>
</dbReference>
<dbReference type="CDD" id="cd01556">
    <property type="entry name" value="EPSP_synthase"/>
    <property type="match status" value="1"/>
</dbReference>
<dbReference type="FunFam" id="3.65.10.10:FF:000005">
    <property type="entry name" value="3-phosphoshikimate 1-carboxyvinyltransferase"/>
    <property type="match status" value="1"/>
</dbReference>
<dbReference type="Gene3D" id="3.65.10.10">
    <property type="entry name" value="Enolpyruvate transferase domain"/>
    <property type="match status" value="2"/>
</dbReference>
<dbReference type="HAMAP" id="MF_00210">
    <property type="entry name" value="EPSP_synth"/>
    <property type="match status" value="1"/>
</dbReference>
<dbReference type="InterPro" id="IPR001986">
    <property type="entry name" value="Enolpyruvate_Tfrase_dom"/>
</dbReference>
<dbReference type="InterPro" id="IPR036968">
    <property type="entry name" value="Enolpyruvate_Tfrase_sf"/>
</dbReference>
<dbReference type="InterPro" id="IPR006264">
    <property type="entry name" value="EPSP_synthase"/>
</dbReference>
<dbReference type="InterPro" id="IPR023193">
    <property type="entry name" value="EPSP_synthase_CS"/>
</dbReference>
<dbReference type="InterPro" id="IPR013792">
    <property type="entry name" value="RNA3'P_cycl/enolpyr_Trfase_a/b"/>
</dbReference>
<dbReference type="NCBIfam" id="TIGR01356">
    <property type="entry name" value="aroA"/>
    <property type="match status" value="1"/>
</dbReference>
<dbReference type="PANTHER" id="PTHR21090">
    <property type="entry name" value="AROM/DEHYDROQUINATE SYNTHASE"/>
    <property type="match status" value="1"/>
</dbReference>
<dbReference type="PANTHER" id="PTHR21090:SF5">
    <property type="entry name" value="PENTAFUNCTIONAL AROM POLYPEPTIDE"/>
    <property type="match status" value="1"/>
</dbReference>
<dbReference type="Pfam" id="PF00275">
    <property type="entry name" value="EPSP_synthase"/>
    <property type="match status" value="1"/>
</dbReference>
<dbReference type="PIRSF" id="PIRSF000505">
    <property type="entry name" value="EPSPS"/>
    <property type="match status" value="1"/>
</dbReference>
<dbReference type="SUPFAM" id="SSF55205">
    <property type="entry name" value="EPT/RTPC-like"/>
    <property type="match status" value="1"/>
</dbReference>
<dbReference type="PROSITE" id="PS00104">
    <property type="entry name" value="EPSP_SYNTHASE_1"/>
    <property type="match status" value="1"/>
</dbReference>
<dbReference type="PROSITE" id="PS00885">
    <property type="entry name" value="EPSP_SYNTHASE_2"/>
    <property type="match status" value="1"/>
</dbReference>
<reference key="1">
    <citation type="journal article" date="2006" name="J. Bacteriol.">
        <title>Comparative genomic evidence for a close relationship between the dimorphic prosthecate bacteria Hyphomonas neptunium and Caulobacter crescentus.</title>
        <authorList>
            <person name="Badger J.H."/>
            <person name="Hoover T.R."/>
            <person name="Brun Y.V."/>
            <person name="Weiner R.M."/>
            <person name="Laub M.T."/>
            <person name="Alexandre G."/>
            <person name="Mrazek J."/>
            <person name="Ren Q."/>
            <person name="Paulsen I.T."/>
            <person name="Nelson K.E."/>
            <person name="Khouri H.M."/>
            <person name="Radune D."/>
            <person name="Sosa J."/>
            <person name="Dodson R.J."/>
            <person name="Sullivan S.A."/>
            <person name="Rosovitz M.J."/>
            <person name="Madupu R."/>
            <person name="Brinkac L.M."/>
            <person name="Durkin A.S."/>
            <person name="Daugherty S.C."/>
            <person name="Kothari S.P."/>
            <person name="Giglio M.G."/>
            <person name="Zhou L."/>
            <person name="Haft D.H."/>
            <person name="Selengut J.D."/>
            <person name="Davidsen T.M."/>
            <person name="Yang Q."/>
            <person name="Zafar N."/>
            <person name="Ward N.L."/>
        </authorList>
    </citation>
    <scope>NUCLEOTIDE SEQUENCE [LARGE SCALE GENOMIC DNA]</scope>
    <source>
        <strain>ATCC 15444</strain>
    </source>
</reference>